<organism>
    <name type="scientific">Mycobacterium tuberculosis (strain ATCC 25618 / H37Rv)</name>
    <dbReference type="NCBI Taxonomy" id="83332"/>
    <lineage>
        <taxon>Bacteria</taxon>
        <taxon>Bacillati</taxon>
        <taxon>Actinomycetota</taxon>
        <taxon>Actinomycetes</taxon>
        <taxon>Mycobacteriales</taxon>
        <taxon>Mycobacteriaceae</taxon>
        <taxon>Mycobacterium</taxon>
        <taxon>Mycobacterium tuberculosis complex</taxon>
    </lineage>
</organism>
<gene>
    <name type="ordered locus">Rv2288</name>
    <name type="ORF">MTCY339.22c</name>
</gene>
<dbReference type="EMBL" id="AL123456">
    <property type="protein sequence ID" value="CCP45070.1"/>
    <property type="molecule type" value="Genomic_DNA"/>
</dbReference>
<dbReference type="PIR" id="D70732">
    <property type="entry name" value="D70732"/>
</dbReference>
<dbReference type="RefSeq" id="NP_216804.1">
    <property type="nucleotide sequence ID" value="NC_000962.3"/>
</dbReference>
<dbReference type="RefSeq" id="WP_003900492.1">
    <property type="nucleotide sequence ID" value="NZ_NVQJ01000012.1"/>
</dbReference>
<dbReference type="STRING" id="83332.Rv2288"/>
<dbReference type="PaxDb" id="83332-Rv2288"/>
<dbReference type="GeneID" id="887702"/>
<dbReference type="KEGG" id="mtu:Rv2288"/>
<dbReference type="KEGG" id="mtv:RVBD_2288"/>
<dbReference type="TubercuList" id="Rv2288"/>
<dbReference type="InParanoid" id="P9WLE5"/>
<dbReference type="Proteomes" id="UP000001584">
    <property type="component" value="Chromosome"/>
</dbReference>
<dbReference type="GO" id="GO:0009274">
    <property type="term" value="C:peptidoglycan-based cell wall"/>
    <property type="evidence" value="ECO:0007005"/>
    <property type="project" value="MTBBASE"/>
</dbReference>
<proteinExistence type="predicted"/>
<keyword id="KW-1185">Reference proteome</keyword>
<reference key="1">
    <citation type="journal article" date="1998" name="Nature">
        <title>Deciphering the biology of Mycobacterium tuberculosis from the complete genome sequence.</title>
        <authorList>
            <person name="Cole S.T."/>
            <person name="Brosch R."/>
            <person name="Parkhill J."/>
            <person name="Garnier T."/>
            <person name="Churcher C.M."/>
            <person name="Harris D.E."/>
            <person name="Gordon S.V."/>
            <person name="Eiglmeier K."/>
            <person name="Gas S."/>
            <person name="Barry C.E. III"/>
            <person name="Tekaia F."/>
            <person name="Badcock K."/>
            <person name="Basham D."/>
            <person name="Brown D."/>
            <person name="Chillingworth T."/>
            <person name="Connor R."/>
            <person name="Davies R.M."/>
            <person name="Devlin K."/>
            <person name="Feltwell T."/>
            <person name="Gentles S."/>
            <person name="Hamlin N."/>
            <person name="Holroyd S."/>
            <person name="Hornsby T."/>
            <person name="Jagels K."/>
            <person name="Krogh A."/>
            <person name="McLean J."/>
            <person name="Moule S."/>
            <person name="Murphy L.D."/>
            <person name="Oliver S."/>
            <person name="Osborne J."/>
            <person name="Quail M.A."/>
            <person name="Rajandream M.A."/>
            <person name="Rogers J."/>
            <person name="Rutter S."/>
            <person name="Seeger K."/>
            <person name="Skelton S."/>
            <person name="Squares S."/>
            <person name="Squares R."/>
            <person name="Sulston J.E."/>
            <person name="Taylor K."/>
            <person name="Whitehead S."/>
            <person name="Barrell B.G."/>
        </authorList>
    </citation>
    <scope>NUCLEOTIDE SEQUENCE [LARGE SCALE GENOMIC DNA]</scope>
    <source>
        <strain>ATCC 25618 / H37Rv</strain>
    </source>
</reference>
<accession>P9WLE5</accession>
<accession>L0T9D6</accession>
<accession>P64975</accession>
<accession>Q50677</accession>
<sequence>MSRRRPLIEPATVQVLAIAFTDSFSVSLHWPQREQGCRTAILAPMRRWCDGDVDGRKLLPPARRTGTQQRRIRPAAPRVYTTGDILRDRKGIAPWQEQREPGWAPFGWLHEPSGARCPKADGQSV</sequence>
<feature type="chain" id="PRO_0000104007" description="Uncharacterized protein Rv2288">
    <location>
        <begin position="1"/>
        <end position="125"/>
    </location>
</feature>
<name>Y2288_MYCTU</name>
<protein>
    <recommendedName>
        <fullName>Uncharacterized protein Rv2288</fullName>
    </recommendedName>
</protein>